<name>ZA2G_MOUSE</name>
<protein>
    <recommendedName>
        <fullName>Zinc-alpha-2-glycoprotein</fullName>
        <shortName>Zn-alpha-2-GP</shortName>
        <shortName>Zn-alpha-2-glycoprotein</shortName>
    </recommendedName>
</protein>
<dbReference type="EMBL" id="D21059">
    <property type="protein sequence ID" value="BAA04638.1"/>
    <property type="molecule type" value="mRNA"/>
</dbReference>
<dbReference type="EMBL" id="AF281658">
    <property type="protein sequence ID" value="AAQ14325.1"/>
    <property type="molecule type" value="Genomic_DNA"/>
</dbReference>
<dbReference type="EMBL" id="AY248694">
    <property type="protein sequence ID" value="AAO93093.1"/>
    <property type="molecule type" value="mRNA"/>
</dbReference>
<dbReference type="EMBL" id="AK005051">
    <property type="protein sequence ID" value="BAB23777.1"/>
    <property type="molecule type" value="mRNA"/>
</dbReference>
<dbReference type="EMBL" id="BC061646">
    <property type="protein sequence ID" value="AAH61646.1"/>
    <property type="molecule type" value="mRNA"/>
</dbReference>
<dbReference type="EMBL" id="D44593">
    <property type="protein sequence ID" value="BAA07996.1"/>
    <property type="molecule type" value="Genomic_DNA"/>
</dbReference>
<dbReference type="CCDS" id="CCDS19783.1"/>
<dbReference type="PIR" id="JX0352">
    <property type="entry name" value="JX0352"/>
</dbReference>
<dbReference type="RefSeq" id="NP_038506.2">
    <property type="nucleotide sequence ID" value="NM_013478.2"/>
</dbReference>
<dbReference type="SMR" id="Q64726"/>
<dbReference type="BioGRID" id="198289">
    <property type="interactions" value="3"/>
</dbReference>
<dbReference type="FunCoup" id="Q64726">
    <property type="interactions" value="72"/>
</dbReference>
<dbReference type="STRING" id="10090.ENSMUSP00000038559"/>
<dbReference type="GlyCosmos" id="Q64726">
    <property type="glycosylation" value="3 sites, No reported glycans"/>
</dbReference>
<dbReference type="GlyGen" id="Q64726">
    <property type="glycosylation" value="3 sites"/>
</dbReference>
<dbReference type="iPTMnet" id="Q64726"/>
<dbReference type="PhosphoSitePlus" id="Q64726"/>
<dbReference type="CPTAC" id="non-CPTAC-3391"/>
<dbReference type="CPTAC" id="non-CPTAC-3392"/>
<dbReference type="jPOST" id="Q64726"/>
<dbReference type="PaxDb" id="10090-ENSMUSP00000038559"/>
<dbReference type="PeptideAtlas" id="Q64726"/>
<dbReference type="ProteomicsDB" id="275261"/>
<dbReference type="Antibodypedia" id="848">
    <property type="antibodies" value="367 antibodies from 33 providers"/>
</dbReference>
<dbReference type="DNASU" id="12007"/>
<dbReference type="Ensembl" id="ENSMUST00000035390.7">
    <property type="protein sequence ID" value="ENSMUSP00000038559.6"/>
    <property type="gene ID" value="ENSMUSG00000037053.7"/>
</dbReference>
<dbReference type="GeneID" id="12007"/>
<dbReference type="KEGG" id="mmu:12007"/>
<dbReference type="UCSC" id="uc009aeh.2">
    <property type="organism name" value="mouse"/>
</dbReference>
<dbReference type="AGR" id="MGI:103163"/>
<dbReference type="CTD" id="563"/>
<dbReference type="MGI" id="MGI:103163">
    <property type="gene designation" value="Azgp1"/>
</dbReference>
<dbReference type="VEuPathDB" id="HostDB:ENSMUSG00000037053"/>
<dbReference type="eggNOG" id="ENOG502RWW3">
    <property type="taxonomic scope" value="Eukaryota"/>
</dbReference>
<dbReference type="GeneTree" id="ENSGT01130000278293"/>
<dbReference type="HOGENOM" id="CLU_047501_0_1_1"/>
<dbReference type="InParanoid" id="Q64726"/>
<dbReference type="OMA" id="APYSCYV"/>
<dbReference type="OrthoDB" id="8936120at2759"/>
<dbReference type="PhylomeDB" id="Q64726"/>
<dbReference type="TreeFam" id="TF336617"/>
<dbReference type="Reactome" id="R-MMU-5223345">
    <property type="pathway name" value="Miscellaneous transport and binding events"/>
</dbReference>
<dbReference type="BioGRID-ORCS" id="12007">
    <property type="hits" value="1 hit in 83 CRISPR screens"/>
</dbReference>
<dbReference type="ChiTaRS" id="Azgp1">
    <property type="organism name" value="mouse"/>
</dbReference>
<dbReference type="PRO" id="PR:Q64726"/>
<dbReference type="Proteomes" id="UP000000589">
    <property type="component" value="Chromosome 5"/>
</dbReference>
<dbReference type="RNAct" id="Q64726">
    <property type="molecule type" value="protein"/>
</dbReference>
<dbReference type="Bgee" id="ENSMUSG00000037053">
    <property type="expression patterns" value="Expressed in left lobe of liver and 82 other cell types or tissues"/>
</dbReference>
<dbReference type="ExpressionAtlas" id="Q64726">
    <property type="expression patterns" value="baseline and differential"/>
</dbReference>
<dbReference type="GO" id="GO:0005615">
    <property type="term" value="C:extracellular space"/>
    <property type="evidence" value="ECO:0007669"/>
    <property type="project" value="Ensembl"/>
</dbReference>
<dbReference type="GO" id="GO:0007155">
    <property type="term" value="P:cell adhesion"/>
    <property type="evidence" value="ECO:0000250"/>
    <property type="project" value="UniProtKB"/>
</dbReference>
<dbReference type="GO" id="GO:0001580">
    <property type="term" value="P:detection of chemical stimulus involved in sensory perception of bitter taste"/>
    <property type="evidence" value="ECO:0007669"/>
    <property type="project" value="Ensembl"/>
</dbReference>
<dbReference type="GO" id="GO:0040014">
    <property type="term" value="P:regulation of multicellular organism growth"/>
    <property type="evidence" value="ECO:0000303"/>
    <property type="project" value="UniProtKB"/>
</dbReference>
<dbReference type="FunFam" id="3.30.500.10:FF:000001">
    <property type="entry name" value="H-2 class I histocompatibility antigen, alpha chain"/>
    <property type="match status" value="1"/>
</dbReference>
<dbReference type="Gene3D" id="2.60.40.10">
    <property type="entry name" value="Immunoglobulins"/>
    <property type="match status" value="1"/>
</dbReference>
<dbReference type="Gene3D" id="3.30.500.10">
    <property type="entry name" value="MHC class I-like antigen recognition-like"/>
    <property type="match status" value="1"/>
</dbReference>
<dbReference type="InterPro" id="IPR007110">
    <property type="entry name" value="Ig-like_dom"/>
</dbReference>
<dbReference type="InterPro" id="IPR036179">
    <property type="entry name" value="Ig-like_dom_sf"/>
</dbReference>
<dbReference type="InterPro" id="IPR013783">
    <property type="entry name" value="Ig-like_fold"/>
</dbReference>
<dbReference type="InterPro" id="IPR003597">
    <property type="entry name" value="Ig_C1-set"/>
</dbReference>
<dbReference type="InterPro" id="IPR050208">
    <property type="entry name" value="MHC_class-I_related"/>
</dbReference>
<dbReference type="InterPro" id="IPR011161">
    <property type="entry name" value="MHC_I-like_Ag-recog"/>
</dbReference>
<dbReference type="InterPro" id="IPR037055">
    <property type="entry name" value="MHC_I-like_Ag-recog_sf"/>
</dbReference>
<dbReference type="InterPro" id="IPR011162">
    <property type="entry name" value="MHC_I/II-like_Ag-recog"/>
</dbReference>
<dbReference type="InterPro" id="IPR001039">
    <property type="entry name" value="MHC_I_a_a1/a2"/>
</dbReference>
<dbReference type="PANTHER" id="PTHR16675">
    <property type="entry name" value="MHC CLASS I-RELATED"/>
    <property type="match status" value="1"/>
</dbReference>
<dbReference type="PANTHER" id="PTHR16675:SF289">
    <property type="entry name" value="ZINC-ALPHA-2-GLYCOPROTEIN"/>
    <property type="match status" value="1"/>
</dbReference>
<dbReference type="Pfam" id="PF07654">
    <property type="entry name" value="C1-set"/>
    <property type="match status" value="1"/>
</dbReference>
<dbReference type="Pfam" id="PF00129">
    <property type="entry name" value="MHC_I"/>
    <property type="match status" value="1"/>
</dbReference>
<dbReference type="PRINTS" id="PR01638">
    <property type="entry name" value="MHCCLASSI"/>
</dbReference>
<dbReference type="SUPFAM" id="SSF48726">
    <property type="entry name" value="Immunoglobulin"/>
    <property type="match status" value="1"/>
</dbReference>
<dbReference type="SUPFAM" id="SSF54452">
    <property type="entry name" value="MHC antigen-recognition domain"/>
    <property type="match status" value="1"/>
</dbReference>
<dbReference type="PROSITE" id="PS50835">
    <property type="entry name" value="IG_LIKE"/>
    <property type="match status" value="1"/>
</dbReference>
<gene>
    <name type="primary">Azgp1</name>
</gene>
<keyword id="KW-1015">Disulfide bond</keyword>
<keyword id="KW-0325">Glycoprotein</keyword>
<keyword id="KW-0873">Pyrrolidone carboxylic acid</keyword>
<keyword id="KW-1185">Reference proteome</keyword>
<keyword id="KW-0964">Secreted</keyword>
<keyword id="KW-0732">Signal</keyword>
<comment type="function">
    <text evidence="1">Stimulates lipid degradation in adipocytes and causes the extensive fat losses associated with some advanced cancers.</text>
</comment>
<comment type="subunit">
    <text evidence="1">Interacts with PIP.</text>
</comment>
<comment type="subcellular location">
    <subcellularLocation>
        <location>Secreted</location>
    </subcellularLocation>
</comment>
<comment type="similarity">
    <text evidence="6">Belongs to the MHC class I family.</text>
</comment>
<accession>Q64726</accession>
<accession>Q9DBB7</accession>
<reference key="1">
    <citation type="journal article" date="1994" name="J. Biochem.">
        <title>Structure and expression of rat and mouse mRNAs for Zn-alpha 2-glycoprotein.</title>
        <authorList>
            <person name="Ueyama H."/>
            <person name="Naitoh H."/>
            <person name="Ohkubo I."/>
        </authorList>
    </citation>
    <scope>NUCLEOTIDE SEQUENCE [MRNA]</scope>
    <source>
        <strain>BALB/cJ</strain>
        <tissue>Liver</tissue>
    </source>
</reference>
<reference key="2">
    <citation type="submission" date="2000-06" db="EMBL/GenBank/DDBJ databases">
        <title>The mouse ZAG gene.</title>
        <authorList>
            <person name="Wanner V."/>
            <person name="Bahram S."/>
        </authorList>
    </citation>
    <scope>NUCLEOTIDE SEQUENCE [GENOMIC DNA]</scope>
    <source>
        <strain>129/SvJ</strain>
    </source>
</reference>
<reference key="3">
    <citation type="submission" date="2003-03" db="EMBL/GenBank/DDBJ databases">
        <authorList>
            <person name="Gohda T."/>
        </authorList>
    </citation>
    <scope>NUCLEOTIDE SEQUENCE [MRNA]</scope>
    <source>
        <strain>KK/Ta</strain>
        <tissue>Kidney</tissue>
    </source>
</reference>
<reference key="4">
    <citation type="journal article" date="2005" name="Science">
        <title>The transcriptional landscape of the mammalian genome.</title>
        <authorList>
            <person name="Carninci P."/>
            <person name="Kasukawa T."/>
            <person name="Katayama S."/>
            <person name="Gough J."/>
            <person name="Frith M.C."/>
            <person name="Maeda N."/>
            <person name="Oyama R."/>
            <person name="Ravasi T."/>
            <person name="Lenhard B."/>
            <person name="Wells C."/>
            <person name="Kodzius R."/>
            <person name="Shimokawa K."/>
            <person name="Bajic V.B."/>
            <person name="Brenner S.E."/>
            <person name="Batalov S."/>
            <person name="Forrest A.R."/>
            <person name="Zavolan M."/>
            <person name="Davis M.J."/>
            <person name="Wilming L.G."/>
            <person name="Aidinis V."/>
            <person name="Allen J.E."/>
            <person name="Ambesi-Impiombato A."/>
            <person name="Apweiler R."/>
            <person name="Aturaliya R.N."/>
            <person name="Bailey T.L."/>
            <person name="Bansal M."/>
            <person name="Baxter L."/>
            <person name="Beisel K.W."/>
            <person name="Bersano T."/>
            <person name="Bono H."/>
            <person name="Chalk A.M."/>
            <person name="Chiu K.P."/>
            <person name="Choudhary V."/>
            <person name="Christoffels A."/>
            <person name="Clutterbuck D.R."/>
            <person name="Crowe M.L."/>
            <person name="Dalla E."/>
            <person name="Dalrymple B.P."/>
            <person name="de Bono B."/>
            <person name="Della Gatta G."/>
            <person name="di Bernardo D."/>
            <person name="Down T."/>
            <person name="Engstrom P."/>
            <person name="Fagiolini M."/>
            <person name="Faulkner G."/>
            <person name="Fletcher C.F."/>
            <person name="Fukushima T."/>
            <person name="Furuno M."/>
            <person name="Futaki S."/>
            <person name="Gariboldi M."/>
            <person name="Georgii-Hemming P."/>
            <person name="Gingeras T.R."/>
            <person name="Gojobori T."/>
            <person name="Green R.E."/>
            <person name="Gustincich S."/>
            <person name="Harbers M."/>
            <person name="Hayashi Y."/>
            <person name="Hensch T.K."/>
            <person name="Hirokawa N."/>
            <person name="Hill D."/>
            <person name="Huminiecki L."/>
            <person name="Iacono M."/>
            <person name="Ikeo K."/>
            <person name="Iwama A."/>
            <person name="Ishikawa T."/>
            <person name="Jakt M."/>
            <person name="Kanapin A."/>
            <person name="Katoh M."/>
            <person name="Kawasawa Y."/>
            <person name="Kelso J."/>
            <person name="Kitamura H."/>
            <person name="Kitano H."/>
            <person name="Kollias G."/>
            <person name="Krishnan S.P."/>
            <person name="Kruger A."/>
            <person name="Kummerfeld S.K."/>
            <person name="Kurochkin I.V."/>
            <person name="Lareau L.F."/>
            <person name="Lazarevic D."/>
            <person name="Lipovich L."/>
            <person name="Liu J."/>
            <person name="Liuni S."/>
            <person name="McWilliam S."/>
            <person name="Madan Babu M."/>
            <person name="Madera M."/>
            <person name="Marchionni L."/>
            <person name="Matsuda H."/>
            <person name="Matsuzawa S."/>
            <person name="Miki H."/>
            <person name="Mignone F."/>
            <person name="Miyake S."/>
            <person name="Morris K."/>
            <person name="Mottagui-Tabar S."/>
            <person name="Mulder N."/>
            <person name="Nakano N."/>
            <person name="Nakauchi H."/>
            <person name="Ng P."/>
            <person name="Nilsson R."/>
            <person name="Nishiguchi S."/>
            <person name="Nishikawa S."/>
            <person name="Nori F."/>
            <person name="Ohara O."/>
            <person name="Okazaki Y."/>
            <person name="Orlando V."/>
            <person name="Pang K.C."/>
            <person name="Pavan W.J."/>
            <person name="Pavesi G."/>
            <person name="Pesole G."/>
            <person name="Petrovsky N."/>
            <person name="Piazza S."/>
            <person name="Reed J."/>
            <person name="Reid J.F."/>
            <person name="Ring B.Z."/>
            <person name="Ringwald M."/>
            <person name="Rost B."/>
            <person name="Ruan Y."/>
            <person name="Salzberg S.L."/>
            <person name="Sandelin A."/>
            <person name="Schneider C."/>
            <person name="Schoenbach C."/>
            <person name="Sekiguchi K."/>
            <person name="Semple C.A."/>
            <person name="Seno S."/>
            <person name="Sessa L."/>
            <person name="Sheng Y."/>
            <person name="Shibata Y."/>
            <person name="Shimada H."/>
            <person name="Shimada K."/>
            <person name="Silva D."/>
            <person name="Sinclair B."/>
            <person name="Sperling S."/>
            <person name="Stupka E."/>
            <person name="Sugiura K."/>
            <person name="Sultana R."/>
            <person name="Takenaka Y."/>
            <person name="Taki K."/>
            <person name="Tammoja K."/>
            <person name="Tan S.L."/>
            <person name="Tang S."/>
            <person name="Taylor M.S."/>
            <person name="Tegner J."/>
            <person name="Teichmann S.A."/>
            <person name="Ueda H.R."/>
            <person name="van Nimwegen E."/>
            <person name="Verardo R."/>
            <person name="Wei C.L."/>
            <person name="Yagi K."/>
            <person name="Yamanishi H."/>
            <person name="Zabarovsky E."/>
            <person name="Zhu S."/>
            <person name="Zimmer A."/>
            <person name="Hide W."/>
            <person name="Bult C."/>
            <person name="Grimmond S.M."/>
            <person name="Teasdale R.D."/>
            <person name="Liu E.T."/>
            <person name="Brusic V."/>
            <person name="Quackenbush J."/>
            <person name="Wahlestedt C."/>
            <person name="Mattick J.S."/>
            <person name="Hume D.A."/>
            <person name="Kai C."/>
            <person name="Sasaki D."/>
            <person name="Tomaru Y."/>
            <person name="Fukuda S."/>
            <person name="Kanamori-Katayama M."/>
            <person name="Suzuki M."/>
            <person name="Aoki J."/>
            <person name="Arakawa T."/>
            <person name="Iida J."/>
            <person name="Imamura K."/>
            <person name="Itoh M."/>
            <person name="Kato T."/>
            <person name="Kawaji H."/>
            <person name="Kawagashira N."/>
            <person name="Kawashima T."/>
            <person name="Kojima M."/>
            <person name="Kondo S."/>
            <person name="Konno H."/>
            <person name="Nakano K."/>
            <person name="Ninomiya N."/>
            <person name="Nishio T."/>
            <person name="Okada M."/>
            <person name="Plessy C."/>
            <person name="Shibata K."/>
            <person name="Shiraki T."/>
            <person name="Suzuki S."/>
            <person name="Tagami M."/>
            <person name="Waki K."/>
            <person name="Watahiki A."/>
            <person name="Okamura-Oho Y."/>
            <person name="Suzuki H."/>
            <person name="Kawai J."/>
            <person name="Hayashizaki Y."/>
        </authorList>
    </citation>
    <scope>NUCLEOTIDE SEQUENCE [LARGE SCALE MRNA]</scope>
    <source>
        <strain>C57BL/6J</strain>
        <tissue>Liver</tissue>
    </source>
</reference>
<reference key="5">
    <citation type="journal article" date="2004" name="Genome Res.">
        <title>The status, quality, and expansion of the NIH full-length cDNA project: the Mammalian Gene Collection (MGC).</title>
        <authorList>
            <consortium name="The MGC Project Team"/>
        </authorList>
    </citation>
    <scope>NUCLEOTIDE SEQUENCE [LARGE SCALE MRNA]</scope>
    <source>
        <strain>FVB/N</strain>
        <tissue>Liver</tissue>
    </source>
</reference>
<reference key="6">
    <citation type="journal article" date="1995" name="Immunogenetics">
        <title>The MHC class I-like Zn-alpha 2-glycoprotein gene maps to mouse chromosome 5.</title>
        <authorList>
            <person name="Noguchi M."/>
            <person name="Kitabatake A."/>
            <person name="Ishibashi T."/>
            <person name="Kasahara M."/>
        </authorList>
    </citation>
    <scope>NUCLEOTIDE SEQUENCE [GENOMIC DNA] OF 235-304</scope>
    <source>
        <strain>C57BL/6J</strain>
    </source>
</reference>
<reference key="7">
    <citation type="journal article" date="2007" name="J. Proteome Res.">
        <title>Enhanced analysis of the mouse plasma proteome using cysteine-containing tryptic glycopeptides.</title>
        <authorList>
            <person name="Bernhard O.K."/>
            <person name="Kapp E.A."/>
            <person name="Simpson R.J."/>
        </authorList>
    </citation>
    <scope>GLYCOSYLATION [LARGE SCALE ANALYSIS] AT ASN-190</scope>
    <source>
        <strain>C57BL/6J</strain>
        <tissue>Plasma</tissue>
    </source>
</reference>
<reference key="8">
    <citation type="journal article" date="2010" name="Cell">
        <title>A tissue-specific atlas of mouse protein phosphorylation and expression.</title>
        <authorList>
            <person name="Huttlin E.L."/>
            <person name="Jedrychowski M.P."/>
            <person name="Elias J.E."/>
            <person name="Goswami T."/>
            <person name="Rad R."/>
            <person name="Beausoleil S.A."/>
            <person name="Villen J."/>
            <person name="Haas W."/>
            <person name="Sowa M.E."/>
            <person name="Gygi S.P."/>
        </authorList>
    </citation>
    <scope>IDENTIFICATION BY MASS SPECTROMETRY [LARGE SCALE ANALYSIS]</scope>
    <source>
        <tissue>Brown adipose tissue</tissue>
        <tissue>Heart</tissue>
        <tissue>Liver</tissue>
        <tissue>Lung</tissue>
        <tissue>Spleen</tissue>
        <tissue>Testis</tissue>
    </source>
</reference>
<evidence type="ECO:0000250" key="1"/>
<evidence type="ECO:0000250" key="2">
    <source>
        <dbReference type="UniProtKB" id="P25311"/>
    </source>
</evidence>
<evidence type="ECO:0000255" key="3"/>
<evidence type="ECO:0000255" key="4">
    <source>
        <dbReference type="PROSITE-ProRule" id="PRU00114"/>
    </source>
</evidence>
<evidence type="ECO:0000269" key="5">
    <source>
    </source>
</evidence>
<evidence type="ECO:0000305" key="6"/>
<proteinExistence type="evidence at protein level"/>
<organism>
    <name type="scientific">Mus musculus</name>
    <name type="common">Mouse</name>
    <dbReference type="NCBI Taxonomy" id="10090"/>
    <lineage>
        <taxon>Eukaryota</taxon>
        <taxon>Metazoa</taxon>
        <taxon>Chordata</taxon>
        <taxon>Craniata</taxon>
        <taxon>Vertebrata</taxon>
        <taxon>Euteleostomi</taxon>
        <taxon>Mammalia</taxon>
        <taxon>Eutheria</taxon>
        <taxon>Euarchontoglires</taxon>
        <taxon>Glires</taxon>
        <taxon>Rodentia</taxon>
        <taxon>Myomorpha</taxon>
        <taxon>Muroidea</taxon>
        <taxon>Muridae</taxon>
        <taxon>Murinae</taxon>
        <taxon>Mus</taxon>
        <taxon>Mus</taxon>
    </lineage>
</organism>
<feature type="signal peptide" evidence="1">
    <location>
        <begin position="1"/>
        <end position="17"/>
    </location>
</feature>
<feature type="chain" id="PRO_0000019013" description="Zinc-alpha-2-glycoprotein">
    <location>
        <begin position="18"/>
        <end position="307"/>
    </location>
</feature>
<feature type="domain" description="Ig-like C1-type">
    <location>
        <begin position="202"/>
        <end position="287"/>
    </location>
</feature>
<feature type="modified residue" description="Pyrrolidone carboxylic acid" evidence="2">
    <location>
        <position position="18"/>
    </location>
</feature>
<feature type="glycosylation site" description="N-linked (GlcNAc...) asparagine" evidence="3">
    <location>
        <position position="123"/>
    </location>
</feature>
<feature type="glycosylation site" description="N-linked (GlcNAc...) asparagine" evidence="5">
    <location>
        <position position="190"/>
    </location>
</feature>
<feature type="glycosylation site" description="N-linked (GlcNAc...) asparagine" evidence="3">
    <location>
        <position position="254"/>
    </location>
</feature>
<feature type="disulfide bond" evidence="4">
    <location>
        <begin position="118"/>
        <end position="181"/>
    </location>
</feature>
<feature type="disulfide bond" evidence="4">
    <location>
        <begin position="220"/>
        <end position="275"/>
    </location>
</feature>
<feature type="sequence conflict" description="In Ref. 1; BAB23777 and 5; AAH61646." evidence="6" ref="1 5">
    <original>Y</original>
    <variation>S</variation>
    <location>
        <position position="24"/>
    </location>
</feature>
<sequence>MVPVLLSLPLLLGPAVFQETGSYYLTFLYTGLSRPSKGFPRFQATAFLNDQAFFHYNSNSGKAEPVGPWSQVEGMEDWEKESQLQRAREEIFLVTLKDIMDYYKDTTGSHTFQGMFGCEITNNRSSGAVWRYAYDGEDFIEFNKEIPAWIPLDPAAANTKLKWEAEKVYVQRAKAYLEEECPEMLKRYLNYSRSHLDRIDPPTVTITSRVIPGGNRIFKCLAYGFYPQRISLHWNKANKKLAFEPERGVFPNGNGTYLSWAEVEVSPQDIDPFFCLIDHRGFSQSLSVQWDRTRKVKDENNVVAQPQ</sequence>